<organism>
    <name type="scientific">Bartonella henselae (strain ATCC 49882 / DSM 28221 / CCUG 30454 / Houston 1)</name>
    <name type="common">Rochalimaea henselae</name>
    <dbReference type="NCBI Taxonomy" id="283166"/>
    <lineage>
        <taxon>Bacteria</taxon>
        <taxon>Pseudomonadati</taxon>
        <taxon>Pseudomonadota</taxon>
        <taxon>Alphaproteobacteria</taxon>
        <taxon>Hyphomicrobiales</taxon>
        <taxon>Bartonellaceae</taxon>
        <taxon>Bartonella</taxon>
    </lineage>
</organism>
<keyword id="KW-0067">ATP-binding</keyword>
<keyword id="KW-0963">Cytoplasm</keyword>
<keyword id="KW-1015">Disulfide bond</keyword>
<keyword id="KW-0547">Nucleotide-binding</keyword>
<keyword id="KW-0694">RNA-binding</keyword>
<keyword id="KW-0808">Transferase</keyword>
<keyword id="KW-0819">tRNA processing</keyword>
<keyword id="KW-0820">tRNA-binding</keyword>
<dbReference type="EC" id="2.8.1.13" evidence="1"/>
<dbReference type="EMBL" id="BX897699">
    <property type="protein sequence ID" value="CAF27985.1"/>
    <property type="molecule type" value="Genomic_DNA"/>
</dbReference>
<dbReference type="RefSeq" id="WP_011181038.1">
    <property type="nucleotide sequence ID" value="NZ_LRIJ02000001.1"/>
</dbReference>
<dbReference type="SMR" id="Q6G2J9"/>
<dbReference type="PaxDb" id="283166-BH12020"/>
<dbReference type="EnsemblBacteria" id="CAF27985">
    <property type="protein sequence ID" value="CAF27985"/>
    <property type="gene ID" value="BH12020"/>
</dbReference>
<dbReference type="GeneID" id="92985810"/>
<dbReference type="KEGG" id="bhe:BH12020"/>
<dbReference type="eggNOG" id="COG0482">
    <property type="taxonomic scope" value="Bacteria"/>
</dbReference>
<dbReference type="OrthoDB" id="9800696at2"/>
<dbReference type="Proteomes" id="UP000000421">
    <property type="component" value="Chromosome"/>
</dbReference>
<dbReference type="GO" id="GO:0005737">
    <property type="term" value="C:cytoplasm"/>
    <property type="evidence" value="ECO:0007669"/>
    <property type="project" value="UniProtKB-SubCell"/>
</dbReference>
<dbReference type="GO" id="GO:0005524">
    <property type="term" value="F:ATP binding"/>
    <property type="evidence" value="ECO:0007669"/>
    <property type="project" value="UniProtKB-KW"/>
</dbReference>
<dbReference type="GO" id="GO:0000049">
    <property type="term" value="F:tRNA binding"/>
    <property type="evidence" value="ECO:0007669"/>
    <property type="project" value="UniProtKB-KW"/>
</dbReference>
<dbReference type="GO" id="GO:0103016">
    <property type="term" value="F:tRNA-uridine 2-sulfurtransferase activity"/>
    <property type="evidence" value="ECO:0007669"/>
    <property type="project" value="UniProtKB-EC"/>
</dbReference>
<dbReference type="GO" id="GO:0002143">
    <property type="term" value="P:tRNA wobble position uridine thiolation"/>
    <property type="evidence" value="ECO:0007669"/>
    <property type="project" value="TreeGrafter"/>
</dbReference>
<dbReference type="CDD" id="cd01998">
    <property type="entry name" value="MnmA_TRMU-like"/>
    <property type="match status" value="1"/>
</dbReference>
<dbReference type="FunFam" id="2.30.30.280:FF:000001">
    <property type="entry name" value="tRNA-specific 2-thiouridylase MnmA"/>
    <property type="match status" value="1"/>
</dbReference>
<dbReference type="FunFam" id="3.40.50.620:FF:000115">
    <property type="entry name" value="tRNA-specific 2-thiouridylase MnmA"/>
    <property type="match status" value="1"/>
</dbReference>
<dbReference type="Gene3D" id="2.30.30.280">
    <property type="entry name" value="Adenine nucleotide alpha hydrolases-like domains"/>
    <property type="match status" value="1"/>
</dbReference>
<dbReference type="Gene3D" id="3.40.50.620">
    <property type="entry name" value="HUPs"/>
    <property type="match status" value="1"/>
</dbReference>
<dbReference type="Gene3D" id="2.40.30.10">
    <property type="entry name" value="Translation factors"/>
    <property type="match status" value="1"/>
</dbReference>
<dbReference type="HAMAP" id="MF_00144">
    <property type="entry name" value="tRNA_thiouridyl_MnmA"/>
    <property type="match status" value="1"/>
</dbReference>
<dbReference type="InterPro" id="IPR004506">
    <property type="entry name" value="MnmA-like"/>
</dbReference>
<dbReference type="InterPro" id="IPR046885">
    <property type="entry name" value="MnmA-like_C"/>
</dbReference>
<dbReference type="InterPro" id="IPR046884">
    <property type="entry name" value="MnmA-like_central"/>
</dbReference>
<dbReference type="InterPro" id="IPR023382">
    <property type="entry name" value="MnmA-like_central_sf"/>
</dbReference>
<dbReference type="InterPro" id="IPR014729">
    <property type="entry name" value="Rossmann-like_a/b/a_fold"/>
</dbReference>
<dbReference type="NCBIfam" id="NF001138">
    <property type="entry name" value="PRK00143.1"/>
    <property type="match status" value="1"/>
</dbReference>
<dbReference type="NCBIfam" id="TIGR00420">
    <property type="entry name" value="trmU"/>
    <property type="match status" value="1"/>
</dbReference>
<dbReference type="PANTHER" id="PTHR11933:SF5">
    <property type="entry name" value="MITOCHONDRIAL TRNA-SPECIFIC 2-THIOURIDYLASE 1"/>
    <property type="match status" value="1"/>
</dbReference>
<dbReference type="PANTHER" id="PTHR11933">
    <property type="entry name" value="TRNA 5-METHYLAMINOMETHYL-2-THIOURIDYLATE -METHYLTRANSFERASE"/>
    <property type="match status" value="1"/>
</dbReference>
<dbReference type="Pfam" id="PF03054">
    <property type="entry name" value="tRNA_Me_trans"/>
    <property type="match status" value="1"/>
</dbReference>
<dbReference type="Pfam" id="PF20258">
    <property type="entry name" value="tRNA_Me_trans_C"/>
    <property type="match status" value="1"/>
</dbReference>
<dbReference type="Pfam" id="PF20259">
    <property type="entry name" value="tRNA_Me_trans_M"/>
    <property type="match status" value="1"/>
</dbReference>
<dbReference type="SUPFAM" id="SSF52402">
    <property type="entry name" value="Adenine nucleotide alpha hydrolases-like"/>
    <property type="match status" value="1"/>
</dbReference>
<reference key="1">
    <citation type="journal article" date="2004" name="Proc. Natl. Acad. Sci. U.S.A.">
        <title>The louse-borne human pathogen Bartonella quintana is a genomic derivative of the zoonotic agent Bartonella henselae.</title>
        <authorList>
            <person name="Alsmark U.C.M."/>
            <person name="Frank A.C."/>
            <person name="Karlberg E.O."/>
            <person name="Legault B.-A."/>
            <person name="Ardell D.H."/>
            <person name="Canbaeck B."/>
            <person name="Eriksson A.-S."/>
            <person name="Naeslund A.K."/>
            <person name="Handley S.A."/>
            <person name="Huvet M."/>
            <person name="La Scola B."/>
            <person name="Holmberg M."/>
            <person name="Andersson S.G.E."/>
        </authorList>
    </citation>
    <scope>NUCLEOTIDE SEQUENCE [LARGE SCALE GENOMIC DNA]</scope>
    <source>
        <strain>ATCC 49882 / DSM 28221 / CCUG 30454 / Houston 1</strain>
    </source>
</reference>
<evidence type="ECO:0000255" key="1">
    <source>
        <dbReference type="HAMAP-Rule" id="MF_00144"/>
    </source>
</evidence>
<sequence length="409" mass="44991">MFLNSLDLPGQPENSRIVVAMSGGVDSSVVAGLLKKEGYDVIGITLQLYDHGAATHRVGACCAGQDIEDARCVAETLGIPHYVLDYEERFREAVIDPFAASYAHGETPVPCIACNQTVKFADLLATARELDADALATGHYIRSRSHGAHRALFRPLDSDRDQSYFLFATTQEQIDYLRFPLGDLPKARVREMATEMGFVVANKHDSQDICFVPQGKYSDIITKLRPEAVNPGVIVHVDGQVLGKHSGIVHYTVGQRRGIGVATGEALYVVYLDVENARVIVGPREMLETHKLFLRDVNWLGDERLDNFPPDGIEMAVKVRSTRPPHLARLHYQEGVFSVDFLECENSVAPGQACVFYDGNSDGARVLGGGFVTHSERAAETEMMLKRVLCNLETTSAVASEFKTKVSYT</sequence>
<feature type="chain" id="PRO_0000349533" description="tRNA-specific 2-thiouridylase MnmA">
    <location>
        <begin position="1"/>
        <end position="409"/>
    </location>
</feature>
<feature type="region of interest" description="Interaction with tRNA" evidence="1">
    <location>
        <begin position="160"/>
        <end position="162"/>
    </location>
</feature>
<feature type="active site" description="Nucleophile" evidence="1">
    <location>
        <position position="114"/>
    </location>
</feature>
<feature type="active site" description="Cysteine persulfide intermediate" evidence="1">
    <location>
        <position position="210"/>
    </location>
</feature>
<feature type="binding site" evidence="1">
    <location>
        <begin position="20"/>
        <end position="27"/>
    </location>
    <ligand>
        <name>ATP</name>
        <dbReference type="ChEBI" id="CHEBI:30616"/>
    </ligand>
</feature>
<feature type="binding site" evidence="1">
    <location>
        <position position="46"/>
    </location>
    <ligand>
        <name>ATP</name>
        <dbReference type="ChEBI" id="CHEBI:30616"/>
    </ligand>
</feature>
<feature type="binding site" evidence="1">
    <location>
        <position position="138"/>
    </location>
    <ligand>
        <name>ATP</name>
        <dbReference type="ChEBI" id="CHEBI:30616"/>
    </ligand>
</feature>
<feature type="site" description="Interaction with tRNA" evidence="1">
    <location>
        <position position="139"/>
    </location>
</feature>
<feature type="site" description="Interaction with tRNA" evidence="1">
    <location>
        <position position="352"/>
    </location>
</feature>
<feature type="disulfide bond" description="Alternate" evidence="1">
    <location>
        <begin position="114"/>
        <end position="210"/>
    </location>
</feature>
<name>MNMA_BARHE</name>
<gene>
    <name evidence="1" type="primary">mnmA</name>
    <name type="ordered locus">BH12020</name>
</gene>
<accession>Q6G2J9</accession>
<comment type="function">
    <text evidence="1">Catalyzes the 2-thiolation of uridine at the wobble position (U34) of tRNA, leading to the formation of s(2)U34.</text>
</comment>
<comment type="catalytic activity">
    <reaction evidence="1">
        <text>S-sulfanyl-L-cysteinyl-[protein] + uridine(34) in tRNA + AH2 + ATP = 2-thiouridine(34) in tRNA + L-cysteinyl-[protein] + A + AMP + diphosphate + H(+)</text>
        <dbReference type="Rhea" id="RHEA:47032"/>
        <dbReference type="Rhea" id="RHEA-COMP:10131"/>
        <dbReference type="Rhea" id="RHEA-COMP:11726"/>
        <dbReference type="Rhea" id="RHEA-COMP:11727"/>
        <dbReference type="Rhea" id="RHEA-COMP:11728"/>
        <dbReference type="ChEBI" id="CHEBI:13193"/>
        <dbReference type="ChEBI" id="CHEBI:15378"/>
        <dbReference type="ChEBI" id="CHEBI:17499"/>
        <dbReference type="ChEBI" id="CHEBI:29950"/>
        <dbReference type="ChEBI" id="CHEBI:30616"/>
        <dbReference type="ChEBI" id="CHEBI:33019"/>
        <dbReference type="ChEBI" id="CHEBI:61963"/>
        <dbReference type="ChEBI" id="CHEBI:65315"/>
        <dbReference type="ChEBI" id="CHEBI:87170"/>
        <dbReference type="ChEBI" id="CHEBI:456215"/>
        <dbReference type="EC" id="2.8.1.13"/>
    </reaction>
</comment>
<comment type="subcellular location">
    <subcellularLocation>
        <location evidence="1">Cytoplasm</location>
    </subcellularLocation>
</comment>
<comment type="similarity">
    <text evidence="1">Belongs to the MnmA/TRMU family.</text>
</comment>
<proteinExistence type="inferred from homology"/>
<protein>
    <recommendedName>
        <fullName evidence="1">tRNA-specific 2-thiouridylase MnmA</fullName>
        <ecNumber evidence="1">2.8.1.13</ecNumber>
    </recommendedName>
</protein>